<reference key="1">
    <citation type="journal article" date="2009" name="PLoS Genet.">
        <title>Organised genome dynamics in the Escherichia coli species results in highly diverse adaptive paths.</title>
        <authorList>
            <person name="Touchon M."/>
            <person name="Hoede C."/>
            <person name="Tenaillon O."/>
            <person name="Barbe V."/>
            <person name="Baeriswyl S."/>
            <person name="Bidet P."/>
            <person name="Bingen E."/>
            <person name="Bonacorsi S."/>
            <person name="Bouchier C."/>
            <person name="Bouvet O."/>
            <person name="Calteau A."/>
            <person name="Chiapello H."/>
            <person name="Clermont O."/>
            <person name="Cruveiller S."/>
            <person name="Danchin A."/>
            <person name="Diard M."/>
            <person name="Dossat C."/>
            <person name="Karoui M.E."/>
            <person name="Frapy E."/>
            <person name="Garry L."/>
            <person name="Ghigo J.M."/>
            <person name="Gilles A.M."/>
            <person name="Johnson J."/>
            <person name="Le Bouguenec C."/>
            <person name="Lescat M."/>
            <person name="Mangenot S."/>
            <person name="Martinez-Jehanne V."/>
            <person name="Matic I."/>
            <person name="Nassif X."/>
            <person name="Oztas S."/>
            <person name="Petit M.A."/>
            <person name="Pichon C."/>
            <person name="Rouy Z."/>
            <person name="Ruf C.S."/>
            <person name="Schneider D."/>
            <person name="Tourret J."/>
            <person name="Vacherie B."/>
            <person name="Vallenet D."/>
            <person name="Medigue C."/>
            <person name="Rocha E.P.C."/>
            <person name="Denamur E."/>
        </authorList>
    </citation>
    <scope>NUCLEOTIDE SEQUENCE [LARGE SCALE GENOMIC DNA]</scope>
    <source>
        <strain>IAI39 / ExPEC</strain>
    </source>
</reference>
<gene>
    <name evidence="1" type="primary">queA</name>
    <name type="ordered locus">ECIAI39_0276</name>
</gene>
<keyword id="KW-0963">Cytoplasm</keyword>
<keyword id="KW-0671">Queuosine biosynthesis</keyword>
<keyword id="KW-0949">S-adenosyl-L-methionine</keyword>
<keyword id="KW-0808">Transferase</keyword>
<name>QUEA_ECO7I</name>
<dbReference type="EC" id="2.4.99.17" evidence="1"/>
<dbReference type="EMBL" id="CU928164">
    <property type="protein sequence ID" value="CAR16416.1"/>
    <property type="molecule type" value="Genomic_DNA"/>
</dbReference>
<dbReference type="RefSeq" id="WP_001266492.1">
    <property type="nucleotide sequence ID" value="NC_011750.1"/>
</dbReference>
<dbReference type="RefSeq" id="YP_002406319.1">
    <property type="nucleotide sequence ID" value="NC_011750.1"/>
</dbReference>
<dbReference type="SMR" id="B7NJ97"/>
<dbReference type="STRING" id="585057.ECIAI39_0276"/>
<dbReference type="GeneID" id="75170422"/>
<dbReference type="KEGG" id="ect:ECIAI39_0276"/>
<dbReference type="PATRIC" id="fig|585057.6.peg.298"/>
<dbReference type="HOGENOM" id="CLU_039110_1_0_6"/>
<dbReference type="UniPathway" id="UPA00392"/>
<dbReference type="Proteomes" id="UP000000749">
    <property type="component" value="Chromosome"/>
</dbReference>
<dbReference type="GO" id="GO:0005737">
    <property type="term" value="C:cytoplasm"/>
    <property type="evidence" value="ECO:0007669"/>
    <property type="project" value="UniProtKB-SubCell"/>
</dbReference>
<dbReference type="GO" id="GO:0051075">
    <property type="term" value="F:S-adenosylmethionine:tRNA ribosyltransferase-isomerase activity"/>
    <property type="evidence" value="ECO:0007669"/>
    <property type="project" value="UniProtKB-EC"/>
</dbReference>
<dbReference type="GO" id="GO:0008616">
    <property type="term" value="P:queuosine biosynthetic process"/>
    <property type="evidence" value="ECO:0007669"/>
    <property type="project" value="UniProtKB-UniRule"/>
</dbReference>
<dbReference type="GO" id="GO:0002099">
    <property type="term" value="P:tRNA wobble guanine modification"/>
    <property type="evidence" value="ECO:0007669"/>
    <property type="project" value="TreeGrafter"/>
</dbReference>
<dbReference type="FunFam" id="2.40.10.240:FF:000001">
    <property type="entry name" value="S-adenosylmethionine:tRNA ribosyltransferase-isomerase"/>
    <property type="match status" value="1"/>
</dbReference>
<dbReference type="FunFam" id="3.40.1780.10:FF:000001">
    <property type="entry name" value="S-adenosylmethionine:tRNA ribosyltransferase-isomerase"/>
    <property type="match status" value="1"/>
</dbReference>
<dbReference type="Gene3D" id="2.40.10.240">
    <property type="entry name" value="QueA-like"/>
    <property type="match status" value="1"/>
</dbReference>
<dbReference type="Gene3D" id="3.40.1780.10">
    <property type="entry name" value="QueA-like"/>
    <property type="match status" value="1"/>
</dbReference>
<dbReference type="HAMAP" id="MF_00113">
    <property type="entry name" value="QueA"/>
    <property type="match status" value="1"/>
</dbReference>
<dbReference type="InterPro" id="IPR003699">
    <property type="entry name" value="QueA"/>
</dbReference>
<dbReference type="InterPro" id="IPR042118">
    <property type="entry name" value="QueA_dom1"/>
</dbReference>
<dbReference type="InterPro" id="IPR042119">
    <property type="entry name" value="QueA_dom2"/>
</dbReference>
<dbReference type="InterPro" id="IPR036100">
    <property type="entry name" value="QueA_sf"/>
</dbReference>
<dbReference type="NCBIfam" id="NF001140">
    <property type="entry name" value="PRK00147.1"/>
    <property type="match status" value="1"/>
</dbReference>
<dbReference type="NCBIfam" id="TIGR00113">
    <property type="entry name" value="queA"/>
    <property type="match status" value="1"/>
</dbReference>
<dbReference type="PANTHER" id="PTHR30307">
    <property type="entry name" value="S-ADENOSYLMETHIONINE:TRNA RIBOSYLTRANSFERASE-ISOMERASE"/>
    <property type="match status" value="1"/>
</dbReference>
<dbReference type="PANTHER" id="PTHR30307:SF0">
    <property type="entry name" value="S-ADENOSYLMETHIONINE:TRNA RIBOSYLTRANSFERASE-ISOMERASE"/>
    <property type="match status" value="1"/>
</dbReference>
<dbReference type="Pfam" id="PF02547">
    <property type="entry name" value="Queuosine_synth"/>
    <property type="match status" value="1"/>
</dbReference>
<dbReference type="SUPFAM" id="SSF111337">
    <property type="entry name" value="QueA-like"/>
    <property type="match status" value="1"/>
</dbReference>
<proteinExistence type="inferred from homology"/>
<evidence type="ECO:0000255" key="1">
    <source>
        <dbReference type="HAMAP-Rule" id="MF_00113"/>
    </source>
</evidence>
<organism>
    <name type="scientific">Escherichia coli O7:K1 (strain IAI39 / ExPEC)</name>
    <dbReference type="NCBI Taxonomy" id="585057"/>
    <lineage>
        <taxon>Bacteria</taxon>
        <taxon>Pseudomonadati</taxon>
        <taxon>Pseudomonadota</taxon>
        <taxon>Gammaproteobacteria</taxon>
        <taxon>Enterobacterales</taxon>
        <taxon>Enterobacteriaceae</taxon>
        <taxon>Escherichia</taxon>
    </lineage>
</organism>
<comment type="function">
    <text evidence="1">Transfers and isomerizes the ribose moiety from AdoMet to the 7-aminomethyl group of 7-deazaguanine (preQ1-tRNA) to give epoxyqueuosine (oQ-tRNA).</text>
</comment>
<comment type="catalytic activity">
    <reaction evidence="1">
        <text>7-aminomethyl-7-carbaguanosine(34) in tRNA + S-adenosyl-L-methionine = epoxyqueuosine(34) in tRNA + adenine + L-methionine + 2 H(+)</text>
        <dbReference type="Rhea" id="RHEA:32155"/>
        <dbReference type="Rhea" id="RHEA-COMP:10342"/>
        <dbReference type="Rhea" id="RHEA-COMP:18582"/>
        <dbReference type="ChEBI" id="CHEBI:15378"/>
        <dbReference type="ChEBI" id="CHEBI:16708"/>
        <dbReference type="ChEBI" id="CHEBI:57844"/>
        <dbReference type="ChEBI" id="CHEBI:59789"/>
        <dbReference type="ChEBI" id="CHEBI:82833"/>
        <dbReference type="ChEBI" id="CHEBI:194443"/>
        <dbReference type="EC" id="2.4.99.17"/>
    </reaction>
</comment>
<comment type="pathway">
    <text evidence="1">tRNA modification; tRNA-queuosine biosynthesis.</text>
</comment>
<comment type="subunit">
    <text evidence="1">Monomer.</text>
</comment>
<comment type="subcellular location">
    <subcellularLocation>
        <location evidence="1">Cytoplasm</location>
    </subcellularLocation>
</comment>
<comment type="similarity">
    <text evidence="1">Belongs to the QueA family.</text>
</comment>
<protein>
    <recommendedName>
        <fullName evidence="1">S-adenosylmethionine:tRNA ribosyltransferase-isomerase</fullName>
        <ecNumber evidence="1">2.4.99.17</ecNumber>
    </recommendedName>
    <alternativeName>
        <fullName evidence="1">Queuosine biosynthesis protein QueA</fullName>
    </alternativeName>
</protein>
<sequence length="356" mass="39417">MRVTDFSFELPESLIAHYPMPERSSCRLLSLDGPTGALTHGTFTDLLDKLNPGDLLVFNNTRVIPARLFGRKASGGKIEVLVERMLDDKRILAHIRASKAPKPGAELLLGDDESINATMTARHGALFEVEFNDDRSVLDILNSIGHMPLPPYIDRPDEDADRELYQTVYSEKPGAVAAPTAGLHFDEPLLEKLRAKGVEMAFVTLHVGAGTFQPVRVDTIEDHIMHSEYAEVPQDVVDAVLAAKARGNRVIAVGTTSVRSLESAAQAAKNDLIEPFFDDTQIFIYPGFQYKVVDALVTNFHLPESTLIMLVSAFAGYQHTMNAYKAAVEEKYRFFSYGDAMFITYNPQAINERVGE</sequence>
<accession>B7NJ97</accession>
<feature type="chain" id="PRO_1000117530" description="S-adenosylmethionine:tRNA ribosyltransferase-isomerase">
    <location>
        <begin position="1"/>
        <end position="356"/>
    </location>
</feature>